<gene>
    <name type="primary">adhA</name>
    <name type="ordered locus">BSU27010</name>
</gene>
<protein>
    <recommendedName>
        <fullName>Probable formaldehyde dehydrogenase AdhA</fullName>
        <ecNumber>1.1.1.-</ecNumber>
    </recommendedName>
</protein>
<accession>C0SPA5</accession>
<accession>O06007</accession>
<accession>Q795Z0</accession>
<dbReference type="EC" id="1.1.1.-"/>
<dbReference type="EMBL" id="X92868">
    <property type="protein sequence ID" value="CAA63467.1"/>
    <property type="molecule type" value="Genomic_DNA"/>
</dbReference>
<dbReference type="EMBL" id="AL009126">
    <property type="protein sequence ID" value="CAB14643.2"/>
    <property type="molecule type" value="Genomic_DNA"/>
</dbReference>
<dbReference type="PIR" id="C69583">
    <property type="entry name" value="C69583"/>
</dbReference>
<dbReference type="RefSeq" id="NP_390579.2">
    <property type="nucleotide sequence ID" value="NC_000964.3"/>
</dbReference>
<dbReference type="RefSeq" id="WP_003229837.1">
    <property type="nucleotide sequence ID" value="NZ_OZ025638.1"/>
</dbReference>
<dbReference type="SMR" id="C0SPA5"/>
<dbReference type="FunCoup" id="C0SPA5">
    <property type="interactions" value="603"/>
</dbReference>
<dbReference type="STRING" id="224308.BSU27010"/>
<dbReference type="PaxDb" id="224308-BSU27010"/>
<dbReference type="EnsemblBacteria" id="CAB14643">
    <property type="protein sequence ID" value="CAB14643"/>
    <property type="gene ID" value="BSU_27010"/>
</dbReference>
<dbReference type="GeneID" id="938739"/>
<dbReference type="KEGG" id="bsu:BSU27010"/>
<dbReference type="PATRIC" id="fig|224308.179.peg.2934"/>
<dbReference type="eggNOG" id="COG1064">
    <property type="taxonomic scope" value="Bacteria"/>
</dbReference>
<dbReference type="InParanoid" id="C0SPA5"/>
<dbReference type="OrthoDB" id="9806940at2"/>
<dbReference type="PhylomeDB" id="C0SPA5"/>
<dbReference type="BioCyc" id="BSUB:BSU27010-MONOMER"/>
<dbReference type="BioCyc" id="MetaCyc:BSU27010-MONOMER"/>
<dbReference type="Proteomes" id="UP000001570">
    <property type="component" value="Chromosome"/>
</dbReference>
<dbReference type="GO" id="GO:0016616">
    <property type="term" value="F:oxidoreductase activity, acting on the CH-OH group of donors, NAD or NADP as acceptor"/>
    <property type="evidence" value="ECO:0000318"/>
    <property type="project" value="GO_Central"/>
</dbReference>
<dbReference type="GO" id="GO:0008270">
    <property type="term" value="F:zinc ion binding"/>
    <property type="evidence" value="ECO:0007669"/>
    <property type="project" value="InterPro"/>
</dbReference>
<dbReference type="CDD" id="cd05283">
    <property type="entry name" value="CAD1"/>
    <property type="match status" value="1"/>
</dbReference>
<dbReference type="FunFam" id="3.40.50.720:FF:000022">
    <property type="entry name" value="Cinnamyl alcohol dehydrogenase"/>
    <property type="match status" value="1"/>
</dbReference>
<dbReference type="Gene3D" id="3.90.180.10">
    <property type="entry name" value="Medium-chain alcohol dehydrogenases, catalytic domain"/>
    <property type="match status" value="1"/>
</dbReference>
<dbReference type="Gene3D" id="3.40.50.720">
    <property type="entry name" value="NAD(P)-binding Rossmann-like Domain"/>
    <property type="match status" value="1"/>
</dbReference>
<dbReference type="InterPro" id="IPR013149">
    <property type="entry name" value="ADH-like_C"/>
</dbReference>
<dbReference type="InterPro" id="IPR013154">
    <property type="entry name" value="ADH-like_N"/>
</dbReference>
<dbReference type="InterPro" id="IPR002328">
    <property type="entry name" value="ADH_Zn_CS"/>
</dbReference>
<dbReference type="InterPro" id="IPR047109">
    <property type="entry name" value="CAD-like"/>
</dbReference>
<dbReference type="InterPro" id="IPR011032">
    <property type="entry name" value="GroES-like_sf"/>
</dbReference>
<dbReference type="InterPro" id="IPR036291">
    <property type="entry name" value="NAD(P)-bd_dom_sf"/>
</dbReference>
<dbReference type="InterPro" id="IPR020843">
    <property type="entry name" value="PKS_ER"/>
</dbReference>
<dbReference type="PANTHER" id="PTHR42683">
    <property type="entry name" value="ALDEHYDE REDUCTASE"/>
    <property type="match status" value="1"/>
</dbReference>
<dbReference type="Pfam" id="PF08240">
    <property type="entry name" value="ADH_N"/>
    <property type="match status" value="1"/>
</dbReference>
<dbReference type="Pfam" id="PF00107">
    <property type="entry name" value="ADH_zinc_N"/>
    <property type="match status" value="1"/>
</dbReference>
<dbReference type="SMART" id="SM00829">
    <property type="entry name" value="PKS_ER"/>
    <property type="match status" value="1"/>
</dbReference>
<dbReference type="SUPFAM" id="SSF50129">
    <property type="entry name" value="GroES-like"/>
    <property type="match status" value="1"/>
</dbReference>
<dbReference type="SUPFAM" id="SSF51735">
    <property type="entry name" value="NAD(P)-binding Rossmann-fold domains"/>
    <property type="match status" value="1"/>
</dbReference>
<dbReference type="PROSITE" id="PS00059">
    <property type="entry name" value="ADH_ZINC"/>
    <property type="match status" value="1"/>
</dbReference>
<organism>
    <name type="scientific">Bacillus subtilis (strain 168)</name>
    <dbReference type="NCBI Taxonomy" id="224308"/>
    <lineage>
        <taxon>Bacteria</taxon>
        <taxon>Bacillati</taxon>
        <taxon>Bacillota</taxon>
        <taxon>Bacilli</taxon>
        <taxon>Bacillales</taxon>
        <taxon>Bacillaceae</taxon>
        <taxon>Bacillus</taxon>
    </lineage>
</organism>
<name>ADHA_BACSU</name>
<keyword id="KW-0479">Metal-binding</keyword>
<keyword id="KW-0560">Oxidoreductase</keyword>
<keyword id="KW-1185">Reference proteome</keyword>
<keyword id="KW-0346">Stress response</keyword>
<keyword id="KW-0862">Zinc</keyword>
<evidence type="ECO:0000255" key="1"/>
<evidence type="ECO:0000269" key="2">
    <source>
    </source>
</evidence>
<evidence type="ECO:0000305" key="3"/>
<feature type="chain" id="PRO_0000378093" description="Probable formaldehyde dehydrogenase AdhA">
    <location>
        <begin position="1"/>
        <end position="349"/>
    </location>
</feature>
<feature type="binding site" evidence="1">
    <location>
        <position position="44"/>
    </location>
    <ligand>
        <name>Zn(2+)</name>
        <dbReference type="ChEBI" id="CHEBI:29105"/>
        <label>1</label>
        <note>catalytic</note>
    </ligand>
</feature>
<feature type="binding site" evidence="1">
    <location>
        <position position="66"/>
    </location>
    <ligand>
        <name>Zn(2+)</name>
        <dbReference type="ChEBI" id="CHEBI:29105"/>
        <label>1</label>
        <note>catalytic</note>
    </ligand>
</feature>
<feature type="binding site" evidence="1">
    <location>
        <position position="97"/>
    </location>
    <ligand>
        <name>Zn(2+)</name>
        <dbReference type="ChEBI" id="CHEBI:29105"/>
        <label>2</label>
    </ligand>
</feature>
<feature type="binding site" evidence="1">
    <location>
        <position position="100"/>
    </location>
    <ligand>
        <name>Zn(2+)</name>
        <dbReference type="ChEBI" id="CHEBI:29105"/>
        <label>2</label>
    </ligand>
</feature>
<feature type="binding site" evidence="1">
    <location>
        <position position="103"/>
    </location>
    <ligand>
        <name>Zn(2+)</name>
        <dbReference type="ChEBI" id="CHEBI:29105"/>
        <label>2</label>
    </ligand>
</feature>
<feature type="binding site" evidence="1">
    <location>
        <position position="111"/>
    </location>
    <ligand>
        <name>Zn(2+)</name>
        <dbReference type="ChEBI" id="CHEBI:29105"/>
        <label>2</label>
    </ligand>
</feature>
<feature type="binding site" evidence="1">
    <location>
        <position position="161"/>
    </location>
    <ligand>
        <name>Zn(2+)</name>
        <dbReference type="ChEBI" id="CHEBI:29105"/>
        <label>1</label>
        <note>catalytic</note>
    </ligand>
</feature>
<feature type="sequence conflict" description="In Ref. 1; CAA63467." evidence="3" ref="1">
    <original>F</original>
    <variation>Y</variation>
    <location>
        <position position="226"/>
    </location>
</feature>
<comment type="function">
    <text evidence="2">Functions in the protection against aldehyde-stress.</text>
</comment>
<comment type="cofactor">
    <cofactor evidence="3">
        <name>Zn(2+)</name>
        <dbReference type="ChEBI" id="CHEBI:29105"/>
    </cofactor>
    <text evidence="3">Binds 2 Zn(2+) ions per subunit.</text>
</comment>
<comment type="induction">
    <text evidence="2">By formaldehyde and methylgloxal, under the control of AdhR. Encoded in an operon with yraA.</text>
</comment>
<comment type="disruption phenotype">
    <text evidence="2">Cells lacking this gene show significantly reduced growth in the presence of formaldehyde but not methylglyoxal.</text>
</comment>
<comment type="similarity">
    <text evidence="3">Belongs to the zinc-containing alcohol dehydrogenase family.</text>
</comment>
<reference key="1">
    <citation type="journal article" date="1997" name="Microbiology">
        <title>A 23911 bp region of the Bacillus subtilis genome comprising genes located upstream and downstream of the lev operon.</title>
        <authorList>
            <person name="Parro V."/>
            <person name="San Roman M."/>
            <person name="Galindo I."/>
            <person name="Purnelle B."/>
            <person name="Bolotin A."/>
            <person name="Sorokin A."/>
            <person name="Mellado R.P."/>
        </authorList>
    </citation>
    <scope>NUCLEOTIDE SEQUENCE [GENOMIC DNA]</scope>
    <source>
        <strain>168</strain>
    </source>
</reference>
<reference key="2">
    <citation type="journal article" date="1997" name="Nature">
        <title>The complete genome sequence of the Gram-positive bacterium Bacillus subtilis.</title>
        <authorList>
            <person name="Kunst F."/>
            <person name="Ogasawara N."/>
            <person name="Moszer I."/>
            <person name="Albertini A.M."/>
            <person name="Alloni G."/>
            <person name="Azevedo V."/>
            <person name="Bertero M.G."/>
            <person name="Bessieres P."/>
            <person name="Bolotin A."/>
            <person name="Borchert S."/>
            <person name="Borriss R."/>
            <person name="Boursier L."/>
            <person name="Brans A."/>
            <person name="Braun M."/>
            <person name="Brignell S.C."/>
            <person name="Bron S."/>
            <person name="Brouillet S."/>
            <person name="Bruschi C.V."/>
            <person name="Caldwell B."/>
            <person name="Capuano V."/>
            <person name="Carter N.M."/>
            <person name="Choi S.-K."/>
            <person name="Codani J.-J."/>
            <person name="Connerton I.F."/>
            <person name="Cummings N.J."/>
            <person name="Daniel R.A."/>
            <person name="Denizot F."/>
            <person name="Devine K.M."/>
            <person name="Duesterhoeft A."/>
            <person name="Ehrlich S.D."/>
            <person name="Emmerson P.T."/>
            <person name="Entian K.-D."/>
            <person name="Errington J."/>
            <person name="Fabret C."/>
            <person name="Ferrari E."/>
            <person name="Foulger D."/>
            <person name="Fritz C."/>
            <person name="Fujita M."/>
            <person name="Fujita Y."/>
            <person name="Fuma S."/>
            <person name="Galizzi A."/>
            <person name="Galleron N."/>
            <person name="Ghim S.-Y."/>
            <person name="Glaser P."/>
            <person name="Goffeau A."/>
            <person name="Golightly E.J."/>
            <person name="Grandi G."/>
            <person name="Guiseppi G."/>
            <person name="Guy B.J."/>
            <person name="Haga K."/>
            <person name="Haiech J."/>
            <person name="Harwood C.R."/>
            <person name="Henaut A."/>
            <person name="Hilbert H."/>
            <person name="Holsappel S."/>
            <person name="Hosono S."/>
            <person name="Hullo M.-F."/>
            <person name="Itaya M."/>
            <person name="Jones L.-M."/>
            <person name="Joris B."/>
            <person name="Karamata D."/>
            <person name="Kasahara Y."/>
            <person name="Klaerr-Blanchard M."/>
            <person name="Klein C."/>
            <person name="Kobayashi Y."/>
            <person name="Koetter P."/>
            <person name="Koningstein G."/>
            <person name="Krogh S."/>
            <person name="Kumano M."/>
            <person name="Kurita K."/>
            <person name="Lapidus A."/>
            <person name="Lardinois S."/>
            <person name="Lauber J."/>
            <person name="Lazarevic V."/>
            <person name="Lee S.-M."/>
            <person name="Levine A."/>
            <person name="Liu H."/>
            <person name="Masuda S."/>
            <person name="Mauel C."/>
            <person name="Medigue C."/>
            <person name="Medina N."/>
            <person name="Mellado R.P."/>
            <person name="Mizuno M."/>
            <person name="Moestl D."/>
            <person name="Nakai S."/>
            <person name="Noback M."/>
            <person name="Noone D."/>
            <person name="O'Reilly M."/>
            <person name="Ogawa K."/>
            <person name="Ogiwara A."/>
            <person name="Oudega B."/>
            <person name="Park S.-H."/>
            <person name="Parro V."/>
            <person name="Pohl T.M."/>
            <person name="Portetelle D."/>
            <person name="Porwollik S."/>
            <person name="Prescott A.M."/>
            <person name="Presecan E."/>
            <person name="Pujic P."/>
            <person name="Purnelle B."/>
            <person name="Rapoport G."/>
            <person name="Rey M."/>
            <person name="Reynolds S."/>
            <person name="Rieger M."/>
            <person name="Rivolta C."/>
            <person name="Rocha E."/>
            <person name="Roche B."/>
            <person name="Rose M."/>
            <person name="Sadaie Y."/>
            <person name="Sato T."/>
            <person name="Scanlan E."/>
            <person name="Schleich S."/>
            <person name="Schroeter R."/>
            <person name="Scoffone F."/>
            <person name="Sekiguchi J."/>
            <person name="Sekowska A."/>
            <person name="Seror S.J."/>
            <person name="Serror P."/>
            <person name="Shin B.-S."/>
            <person name="Soldo B."/>
            <person name="Sorokin A."/>
            <person name="Tacconi E."/>
            <person name="Takagi T."/>
            <person name="Takahashi H."/>
            <person name="Takemaru K."/>
            <person name="Takeuchi M."/>
            <person name="Tamakoshi A."/>
            <person name="Tanaka T."/>
            <person name="Terpstra P."/>
            <person name="Tognoni A."/>
            <person name="Tosato V."/>
            <person name="Uchiyama S."/>
            <person name="Vandenbol M."/>
            <person name="Vannier F."/>
            <person name="Vassarotti A."/>
            <person name="Viari A."/>
            <person name="Wambutt R."/>
            <person name="Wedler E."/>
            <person name="Wedler H."/>
            <person name="Weitzenegger T."/>
            <person name="Winters P."/>
            <person name="Wipat A."/>
            <person name="Yamamoto H."/>
            <person name="Yamane K."/>
            <person name="Yasumoto K."/>
            <person name="Yata K."/>
            <person name="Yoshida K."/>
            <person name="Yoshikawa H.-F."/>
            <person name="Zumstein E."/>
            <person name="Yoshikawa H."/>
            <person name="Danchin A."/>
        </authorList>
    </citation>
    <scope>NUCLEOTIDE SEQUENCE [LARGE SCALE GENOMIC DNA]</scope>
    <source>
        <strain>168</strain>
    </source>
</reference>
<reference key="3">
    <citation type="journal article" date="2009" name="Microbiology">
        <title>From a consortium sequence to a unified sequence: the Bacillus subtilis 168 reference genome a decade later.</title>
        <authorList>
            <person name="Barbe V."/>
            <person name="Cruveiller S."/>
            <person name="Kunst F."/>
            <person name="Lenoble P."/>
            <person name="Meurice G."/>
            <person name="Sekowska A."/>
            <person name="Vallenet D."/>
            <person name="Wang T."/>
            <person name="Moszer I."/>
            <person name="Medigue C."/>
            <person name="Danchin A."/>
        </authorList>
    </citation>
    <scope>SEQUENCE REVISION TO 226</scope>
</reference>
<reference key="4">
    <citation type="journal article" date="2009" name="Mol. Microbiol.">
        <title>Genome-wide responses to carbonyl electrophiles in Bacillus subtilis: control of the thiol-dependent formaldehyde dehydrogenase AdhA and cysteine proteinase YraA by the MerR-family regulator YraB (AdhR).</title>
        <authorList>
            <person name="Nguyen T.T.H."/>
            <person name="Eiamphungporn W."/>
            <person name="Maeder U."/>
            <person name="Liebeke M."/>
            <person name="Lalk M."/>
            <person name="Hecker M."/>
            <person name="Helmann J.D."/>
            <person name="Antelmann H."/>
        </authorList>
    </citation>
    <scope>FUNCTION</scope>
    <scope>INDUCTION</scope>
    <scope>OPERON STRUCTURE</scope>
    <scope>DISRUPTION PHENOTYPE</scope>
    <source>
        <strain>168</strain>
    </source>
</reference>
<sequence length="349" mass="37806">MCNQHQTRVLSVSHAKAKFEQTTIERRGLRPHDVLIDIKFSGICHSDIHSAFDEWGGGIFPMVPGHEIAGVVTAVGTKVTKLAVGDRVGVGCFVDSCGECEYCLNAEEQFCTKGVVQTYNSVDYDGNPTYGGYSQKIVVTDRFVVRIPDRLEMDVASPLLCAGITTYSPLKHWNVGPGKKVAIVGVGGLGHLAIQFAHAMGAEVTVLSRSMNKKEEALELGANHYFATSDPATFTALAGRFDVILNTVSANLDVDAYLSMLRIDGTLVSVGAPAKPDTYSVFSLIMGRRSIAGSLVGGIQETQEMLDFAAEHGIEPKIEVIGADQVDEAYERILRSDVRYRFVIDISTL</sequence>
<proteinExistence type="evidence at transcript level"/>